<protein>
    <recommendedName>
        <fullName>Cathepsin D</fullName>
        <ecNumber>3.4.23.5</ecNumber>
    </recommendedName>
    <component>
        <recommendedName>
            <fullName>Cathepsin D light chain</fullName>
        </recommendedName>
    </component>
    <component>
        <recommendedName>
            <fullName>Cathepsin D heavy chain</fullName>
        </recommendedName>
    </component>
</protein>
<keyword id="KW-0064">Aspartyl protease</keyword>
<keyword id="KW-0903">Direct protein sequencing</keyword>
<keyword id="KW-1015">Disulfide bond</keyword>
<keyword id="KW-0325">Glycoprotein</keyword>
<keyword id="KW-0378">Hydrolase</keyword>
<keyword id="KW-0458">Lysosome</keyword>
<keyword id="KW-0645">Protease</keyword>
<keyword id="KW-1185">Reference proteome</keyword>
<keyword id="KW-0732">Signal</keyword>
<keyword id="KW-0865">Zymogen</keyword>
<accession>Q05744</accession>
<sequence>MAPRGLLVLLLLALVGPCAALIRIPLTKFTSTRRMLTEVGSEIPDMNAITQFLKFKLGFADLAEPTPEILKNYMDAQYYGEIGIGTPPQKFTVVFDTGSSNLWVPSVHCHLLDIACLLHHKYDASKSSTYVENGTEFAIHYGTGSLSGFLSQDTVTLGNLKIKNQIFGEAVKQPGITFIAAKFDGILGMAFPRISVDKVTPFFDNVMQQKLIEKNIFSFYLNRDPTAQPGGELLLGGTDPKYYSGDFSWVNVTRKAYWQVHMDSVDVANGLTLCKGGCEAIVDTGTSLITGPTKEVKELQTAIGAKPLIKGQYVISCDKISSLPVVTLMLGGKPYQLTGEQYVFKVSAQGETICLSGFSGLDVPPPGGPLWILGDVFIGPYYTVFDRDNDSVGFAKCV</sequence>
<reference key="1">
    <citation type="journal article" date="1992" name="DNA Cell Biol.">
        <title>Molecular cloning and functional characterization of chicken cathepsin D, a key enzyme for yolk formation.</title>
        <authorList>
            <person name="Retzek H."/>
            <person name="Steyrer E."/>
            <person name="Sanders E.J."/>
            <person name="Nimpf J."/>
            <person name="Schneider W.J."/>
        </authorList>
    </citation>
    <scope>NUCLEOTIDE SEQUENCE [MRNA]</scope>
    <scope>PROTEIN SEQUENCE OF 64-97</scope>
    <source>
        <tissue>Follicular cell</tissue>
    </source>
</reference>
<gene>
    <name type="primary">CTSD</name>
</gene>
<dbReference type="EC" id="3.4.23.5"/>
<dbReference type="EMBL" id="S49650">
    <property type="protein sequence ID" value="AAB24157.1"/>
    <property type="molecule type" value="mRNA"/>
</dbReference>
<dbReference type="PIR" id="I51185">
    <property type="entry name" value="I51185"/>
</dbReference>
<dbReference type="RefSeq" id="NP_990508.1">
    <property type="nucleotide sequence ID" value="NM_205177.2"/>
</dbReference>
<dbReference type="SMR" id="Q05744"/>
<dbReference type="FunCoup" id="Q05744">
    <property type="interactions" value="2206"/>
</dbReference>
<dbReference type="STRING" id="9031.ENSGALP00000010662"/>
<dbReference type="MEROPS" id="A01.009"/>
<dbReference type="GlyCosmos" id="Q05744">
    <property type="glycosylation" value="2 sites, No reported glycans"/>
</dbReference>
<dbReference type="GlyGen" id="Q05744">
    <property type="glycosylation" value="2 sites"/>
</dbReference>
<dbReference type="PaxDb" id="9031-ENSGALP00000010662"/>
<dbReference type="Ensembl" id="ENSGALT00010060089.1">
    <property type="protein sequence ID" value="ENSGALP00010036849.1"/>
    <property type="gene ID" value="ENSGALG00010024624.1"/>
</dbReference>
<dbReference type="GeneID" id="396090"/>
<dbReference type="KEGG" id="gga:396090"/>
<dbReference type="CTD" id="1509"/>
<dbReference type="VEuPathDB" id="HostDB:geneid_396090"/>
<dbReference type="eggNOG" id="KOG1339">
    <property type="taxonomic scope" value="Eukaryota"/>
</dbReference>
<dbReference type="GeneTree" id="ENSGT00940000155733"/>
<dbReference type="HOGENOM" id="CLU_013253_3_3_1"/>
<dbReference type="InParanoid" id="Q05744"/>
<dbReference type="OMA" id="KYDHDAS"/>
<dbReference type="OrthoDB" id="771136at2759"/>
<dbReference type="PhylomeDB" id="Q05744"/>
<dbReference type="TreeFam" id="TF314990"/>
<dbReference type="Reactome" id="R-GGA-2022377">
    <property type="pathway name" value="Metabolism of Angiotensinogen to Angiotensins"/>
</dbReference>
<dbReference type="Reactome" id="R-GGA-2132295">
    <property type="pathway name" value="MHC class II antigen presentation"/>
</dbReference>
<dbReference type="Reactome" id="R-GGA-6798695">
    <property type="pathway name" value="Neutrophil degranulation"/>
</dbReference>
<dbReference type="Reactome" id="R-GGA-77387">
    <property type="pathway name" value="Insulin receptor recycling"/>
</dbReference>
<dbReference type="PRO" id="PR:Q05744"/>
<dbReference type="Proteomes" id="UP000000539">
    <property type="component" value="Chromosome 5"/>
</dbReference>
<dbReference type="Bgee" id="ENSGALG00000006613">
    <property type="expression patterns" value="Expressed in lung and 13 other cell types or tissues"/>
</dbReference>
<dbReference type="GO" id="GO:0005829">
    <property type="term" value="C:cytosol"/>
    <property type="evidence" value="ECO:0007669"/>
    <property type="project" value="Ensembl"/>
</dbReference>
<dbReference type="GO" id="GO:0031904">
    <property type="term" value="C:endosome lumen"/>
    <property type="evidence" value="ECO:0007669"/>
    <property type="project" value="Ensembl"/>
</dbReference>
<dbReference type="GO" id="GO:0010008">
    <property type="term" value="C:endosome membrane"/>
    <property type="evidence" value="ECO:0007669"/>
    <property type="project" value="Ensembl"/>
</dbReference>
<dbReference type="GO" id="GO:0005615">
    <property type="term" value="C:extracellular space"/>
    <property type="evidence" value="ECO:0000318"/>
    <property type="project" value="GO_Central"/>
</dbReference>
<dbReference type="GO" id="GO:0005765">
    <property type="term" value="C:lysosomal membrane"/>
    <property type="evidence" value="ECO:0007669"/>
    <property type="project" value="Ensembl"/>
</dbReference>
<dbReference type="GO" id="GO:0005764">
    <property type="term" value="C:lysosome"/>
    <property type="evidence" value="ECO:0000314"/>
    <property type="project" value="AgBase"/>
</dbReference>
<dbReference type="GO" id="GO:0045121">
    <property type="term" value="C:membrane raft"/>
    <property type="evidence" value="ECO:0007669"/>
    <property type="project" value="Ensembl"/>
</dbReference>
<dbReference type="GO" id="GO:0004190">
    <property type="term" value="F:aspartic-type endopeptidase activity"/>
    <property type="evidence" value="ECO:0000318"/>
    <property type="project" value="GO_Central"/>
</dbReference>
<dbReference type="GO" id="GO:0060561">
    <property type="term" value="P:apoptotic process involved in morphogenesis"/>
    <property type="evidence" value="ECO:0000314"/>
    <property type="project" value="AgBase"/>
</dbReference>
<dbReference type="GO" id="GO:0000045">
    <property type="term" value="P:autophagosome assembly"/>
    <property type="evidence" value="ECO:0007669"/>
    <property type="project" value="Ensembl"/>
</dbReference>
<dbReference type="GO" id="GO:0097194">
    <property type="term" value="P:execution phase of apoptosis"/>
    <property type="evidence" value="ECO:0007669"/>
    <property type="project" value="Ensembl"/>
</dbReference>
<dbReference type="GO" id="GO:1901143">
    <property type="term" value="P:insulin catabolic process"/>
    <property type="evidence" value="ECO:0007669"/>
    <property type="project" value="Ensembl"/>
</dbReference>
<dbReference type="GO" id="GO:0038020">
    <property type="term" value="P:insulin receptor recycling"/>
    <property type="evidence" value="ECO:0007669"/>
    <property type="project" value="Ensembl"/>
</dbReference>
<dbReference type="GO" id="GO:0042159">
    <property type="term" value="P:lipoprotein catabolic process"/>
    <property type="evidence" value="ECO:0007669"/>
    <property type="project" value="Ensembl"/>
</dbReference>
<dbReference type="GO" id="GO:0043065">
    <property type="term" value="P:positive regulation of apoptotic process"/>
    <property type="evidence" value="ECO:0007669"/>
    <property type="project" value="Ensembl"/>
</dbReference>
<dbReference type="GO" id="GO:0006508">
    <property type="term" value="P:proteolysis"/>
    <property type="evidence" value="ECO:0000318"/>
    <property type="project" value="GO_Central"/>
</dbReference>
<dbReference type="GO" id="GO:0070201">
    <property type="term" value="P:regulation of establishment of protein localization"/>
    <property type="evidence" value="ECO:0007669"/>
    <property type="project" value="Ensembl"/>
</dbReference>
<dbReference type="CDD" id="cd05490">
    <property type="entry name" value="Cathepsin_D2"/>
    <property type="match status" value="1"/>
</dbReference>
<dbReference type="FunFam" id="2.40.70.10:FF:000039">
    <property type="entry name" value="Cathepsin D preproprotein"/>
    <property type="match status" value="1"/>
</dbReference>
<dbReference type="FunFam" id="2.40.70.10:FF:000047">
    <property type="entry name" value="Cathepsin D preproprotein"/>
    <property type="match status" value="1"/>
</dbReference>
<dbReference type="Gene3D" id="2.40.70.10">
    <property type="entry name" value="Acid Proteases"/>
    <property type="match status" value="3"/>
</dbReference>
<dbReference type="InterPro" id="IPR001461">
    <property type="entry name" value="Aspartic_peptidase_A1"/>
</dbReference>
<dbReference type="InterPro" id="IPR001969">
    <property type="entry name" value="Aspartic_peptidase_AS"/>
</dbReference>
<dbReference type="InterPro" id="IPR033144">
    <property type="entry name" value="Cathepsin_D"/>
</dbReference>
<dbReference type="InterPro" id="IPR033121">
    <property type="entry name" value="PEPTIDASE_A1"/>
</dbReference>
<dbReference type="InterPro" id="IPR021109">
    <property type="entry name" value="Peptidase_aspartic_dom_sf"/>
</dbReference>
<dbReference type="PANTHER" id="PTHR47966">
    <property type="entry name" value="BETA-SITE APP-CLEAVING ENZYME, ISOFORM A-RELATED"/>
    <property type="match status" value="1"/>
</dbReference>
<dbReference type="PANTHER" id="PTHR47966:SF42">
    <property type="entry name" value="CATHEPSIN D"/>
    <property type="match status" value="1"/>
</dbReference>
<dbReference type="Pfam" id="PF00026">
    <property type="entry name" value="Asp"/>
    <property type="match status" value="1"/>
</dbReference>
<dbReference type="PRINTS" id="PR00792">
    <property type="entry name" value="PEPSIN"/>
</dbReference>
<dbReference type="SUPFAM" id="SSF50630">
    <property type="entry name" value="Acid proteases"/>
    <property type="match status" value="1"/>
</dbReference>
<dbReference type="PROSITE" id="PS00141">
    <property type="entry name" value="ASP_PROTEASE"/>
    <property type="match status" value="2"/>
</dbReference>
<dbReference type="PROSITE" id="PS51767">
    <property type="entry name" value="PEPTIDASE_A1"/>
    <property type="match status" value="1"/>
</dbReference>
<evidence type="ECO:0000250" key="1"/>
<evidence type="ECO:0000255" key="2"/>
<evidence type="ECO:0000255" key="3">
    <source>
        <dbReference type="PROSITE-ProRule" id="PRU01103"/>
    </source>
</evidence>
<evidence type="ECO:0000255" key="4">
    <source>
        <dbReference type="PROSITE-ProRule" id="PRU10094"/>
    </source>
</evidence>
<evidence type="ECO:0000305" key="5"/>
<name>CATD_CHICK</name>
<feature type="signal peptide" evidence="2">
    <location>
        <begin position="1"/>
        <end position="20"/>
    </location>
</feature>
<feature type="propeptide" id="PRO_0000025966" description="Activation peptide" evidence="2">
    <location>
        <begin position="21"/>
        <end position="63"/>
    </location>
</feature>
<feature type="chain" id="PRO_0000025967" description="Cathepsin D">
    <location>
        <begin position="64"/>
        <end position="398"/>
    </location>
</feature>
<feature type="chain" id="PRO_0000025968" description="Cathepsin D light chain" evidence="5">
    <location>
        <begin position="64"/>
        <end position="157"/>
    </location>
</feature>
<feature type="chain" id="PRO_0000025969" description="Cathepsin D heavy chain" evidence="5">
    <location>
        <begin position="158"/>
        <end position="398"/>
    </location>
</feature>
<feature type="domain" description="Peptidase A1" evidence="3">
    <location>
        <begin position="78"/>
        <end position="395"/>
    </location>
</feature>
<feature type="active site" evidence="4">
    <location>
        <position position="96"/>
    </location>
</feature>
<feature type="active site" evidence="4">
    <location>
        <position position="283"/>
    </location>
</feature>
<feature type="glycosylation site" description="N-linked (GlcNAc...) asparagine" evidence="2">
    <location>
        <position position="133"/>
    </location>
</feature>
<feature type="glycosylation site" description="N-linked (GlcNAc...) asparagine" evidence="2">
    <location>
        <position position="251"/>
    </location>
</feature>
<feature type="disulfide bond" evidence="1">
    <location>
        <begin position="109"/>
        <end position="116"/>
    </location>
</feature>
<feature type="disulfide bond" evidence="1">
    <location>
        <begin position="274"/>
        <end position="278"/>
    </location>
</feature>
<feature type="disulfide bond" evidence="1">
    <location>
        <begin position="317"/>
        <end position="354"/>
    </location>
</feature>
<comment type="function">
    <text>Acid protease active in intracellular protein breakdown. In chicken it is a key enzyme for yolk formation as it is capable of catalyzing intra oocytic break down of protein components of both vitellogenin and VLDL.</text>
</comment>
<comment type="catalytic activity">
    <reaction>
        <text>Specificity similar to, but narrower than, that of pepsin A. Does not cleave the 4-Gln-|-His-5 bond in B chain of insulin.</text>
        <dbReference type="EC" id="3.4.23.5"/>
    </reaction>
</comment>
<comment type="subunit">
    <text>Consists of a light chain and a heavy chain.</text>
</comment>
<comment type="subcellular location">
    <subcellularLocation>
        <location>Lysosome</location>
    </subcellularLocation>
</comment>
<comment type="tissue specificity">
    <text>Oocytic yolk, preovulatory follicles, liver.</text>
</comment>
<comment type="similarity">
    <text evidence="5">Belongs to the peptidase A1 family.</text>
</comment>
<organism>
    <name type="scientific">Gallus gallus</name>
    <name type="common">Chicken</name>
    <dbReference type="NCBI Taxonomy" id="9031"/>
    <lineage>
        <taxon>Eukaryota</taxon>
        <taxon>Metazoa</taxon>
        <taxon>Chordata</taxon>
        <taxon>Craniata</taxon>
        <taxon>Vertebrata</taxon>
        <taxon>Euteleostomi</taxon>
        <taxon>Archelosauria</taxon>
        <taxon>Archosauria</taxon>
        <taxon>Dinosauria</taxon>
        <taxon>Saurischia</taxon>
        <taxon>Theropoda</taxon>
        <taxon>Coelurosauria</taxon>
        <taxon>Aves</taxon>
        <taxon>Neognathae</taxon>
        <taxon>Galloanserae</taxon>
        <taxon>Galliformes</taxon>
        <taxon>Phasianidae</taxon>
        <taxon>Phasianinae</taxon>
        <taxon>Gallus</taxon>
    </lineage>
</organism>
<proteinExistence type="evidence at protein level"/>